<organism>
    <name type="scientific">Wolinella succinogenes (strain ATCC 29543 / DSM 1740 / CCUG 13145 / JCM 31913 / LMG 7466 / NCTC 11488 / FDC 602W)</name>
    <name type="common">Vibrio succinogenes</name>
    <dbReference type="NCBI Taxonomy" id="273121"/>
    <lineage>
        <taxon>Bacteria</taxon>
        <taxon>Pseudomonadati</taxon>
        <taxon>Campylobacterota</taxon>
        <taxon>Epsilonproteobacteria</taxon>
        <taxon>Campylobacterales</taxon>
        <taxon>Helicobacteraceae</taxon>
        <taxon>Wolinella</taxon>
    </lineage>
</organism>
<proteinExistence type="inferred from homology"/>
<protein>
    <recommendedName>
        <fullName evidence="1">Phosphoglycerate kinase</fullName>
        <ecNumber evidence="1">2.7.2.3</ecNumber>
    </recommendedName>
</protein>
<feature type="chain" id="PRO_0000146040" description="Phosphoglycerate kinase">
    <location>
        <begin position="1"/>
        <end position="401"/>
    </location>
</feature>
<feature type="binding site" evidence="1">
    <location>
        <begin position="29"/>
        <end position="31"/>
    </location>
    <ligand>
        <name>substrate</name>
    </ligand>
</feature>
<feature type="binding site" evidence="1">
    <location>
        <position position="45"/>
    </location>
    <ligand>
        <name>substrate</name>
    </ligand>
</feature>
<feature type="binding site" evidence="1">
    <location>
        <begin position="69"/>
        <end position="72"/>
    </location>
    <ligand>
        <name>substrate</name>
    </ligand>
</feature>
<feature type="binding site" evidence="1">
    <location>
        <position position="125"/>
    </location>
    <ligand>
        <name>substrate</name>
    </ligand>
</feature>
<feature type="binding site" evidence="1">
    <location>
        <position position="158"/>
    </location>
    <ligand>
        <name>substrate</name>
    </ligand>
</feature>
<feature type="binding site" evidence="1">
    <location>
        <position position="209"/>
    </location>
    <ligand>
        <name>ATP</name>
        <dbReference type="ChEBI" id="CHEBI:30616"/>
    </ligand>
</feature>
<feature type="binding site" evidence="1">
    <location>
        <position position="331"/>
    </location>
    <ligand>
        <name>ATP</name>
        <dbReference type="ChEBI" id="CHEBI:30616"/>
    </ligand>
</feature>
<feature type="binding site" evidence="1">
    <location>
        <begin position="357"/>
        <end position="360"/>
    </location>
    <ligand>
        <name>ATP</name>
        <dbReference type="ChEBI" id="CHEBI:30616"/>
    </ligand>
</feature>
<accession>Q7M9C1</accession>
<reference key="1">
    <citation type="journal article" date="2003" name="Proc. Natl. Acad. Sci. U.S.A.">
        <title>Complete genome sequence and analysis of Wolinella succinogenes.</title>
        <authorList>
            <person name="Baar C."/>
            <person name="Eppinger M."/>
            <person name="Raddatz G."/>
            <person name="Simon J."/>
            <person name="Lanz C."/>
            <person name="Klimmek O."/>
            <person name="Nandakumar R."/>
            <person name="Gross R."/>
            <person name="Rosinus A."/>
            <person name="Keller H."/>
            <person name="Jagtap P."/>
            <person name="Linke B."/>
            <person name="Meyer F."/>
            <person name="Lederer H."/>
            <person name="Schuster S.C."/>
        </authorList>
    </citation>
    <scope>NUCLEOTIDE SEQUENCE [LARGE SCALE GENOMIC DNA]</scope>
    <source>
        <strain>ATCC 29543 / DSM 1740 / CCUG 13145 / JCM 31913 / LMG 7466 / NCTC 11488 / FDC 602W</strain>
    </source>
</reference>
<evidence type="ECO:0000255" key="1">
    <source>
        <dbReference type="HAMAP-Rule" id="MF_00145"/>
    </source>
</evidence>
<name>PGK_WOLSU</name>
<keyword id="KW-0067">ATP-binding</keyword>
<keyword id="KW-0963">Cytoplasm</keyword>
<keyword id="KW-0324">Glycolysis</keyword>
<keyword id="KW-0418">Kinase</keyword>
<keyword id="KW-0547">Nucleotide-binding</keyword>
<keyword id="KW-1185">Reference proteome</keyword>
<keyword id="KW-0808">Transferase</keyword>
<sequence length="401" mass="43652">MVAGINLMQETKSIRDVEIEGKRVLIRVDFNVPMDSDFNISDDTRIREAIPTINHCIDNGAKSIVLVSHLGRPRGKSSEFSLKHILKRLERLLNRSVIFVESLEGVSSVMATLPQKSVILLENIRFLEGEEKNDEKLSKNLASLCDIYINDAFGASHRKHASTYGVAKFAPVKVAGLLLKKEIDSFAKALASPLKPVLLIVGGSKVSSKITLLSNILDVVDKIVIGGAMSNTFLKSLGYDMQRSLVEDPLVPEAAKILGLAKQKGVKIYLPVDVVCTDDIKNPKEIKITPAQDVPENFLAADIGPASVKLFGEVIRDCETIIWNGPMGVYEVQNFSRGTFQLAHVVADTYAYSVIGGGDTADAIDRAGEKDNMSFTSTGGGASLELLEGKILPAFEVLERK</sequence>
<comment type="catalytic activity">
    <reaction evidence="1">
        <text>(2R)-3-phosphoglycerate + ATP = (2R)-3-phospho-glyceroyl phosphate + ADP</text>
        <dbReference type="Rhea" id="RHEA:14801"/>
        <dbReference type="ChEBI" id="CHEBI:30616"/>
        <dbReference type="ChEBI" id="CHEBI:57604"/>
        <dbReference type="ChEBI" id="CHEBI:58272"/>
        <dbReference type="ChEBI" id="CHEBI:456216"/>
        <dbReference type="EC" id="2.7.2.3"/>
    </reaction>
</comment>
<comment type="pathway">
    <text evidence="1">Carbohydrate degradation; glycolysis; pyruvate from D-glyceraldehyde 3-phosphate: step 2/5.</text>
</comment>
<comment type="subunit">
    <text evidence="1">Monomer.</text>
</comment>
<comment type="subcellular location">
    <subcellularLocation>
        <location evidence="1">Cytoplasm</location>
    </subcellularLocation>
</comment>
<comment type="similarity">
    <text evidence="1">Belongs to the phosphoglycerate kinase family.</text>
</comment>
<dbReference type="EC" id="2.7.2.3" evidence="1"/>
<dbReference type="EMBL" id="BX571659">
    <property type="protein sequence ID" value="CAE10131.1"/>
    <property type="molecule type" value="Genomic_DNA"/>
</dbReference>
<dbReference type="RefSeq" id="WP_011138924.1">
    <property type="nucleotide sequence ID" value="NC_005090.1"/>
</dbReference>
<dbReference type="SMR" id="Q7M9C1"/>
<dbReference type="STRING" id="273121.WS1030"/>
<dbReference type="KEGG" id="wsu:WS1030"/>
<dbReference type="eggNOG" id="COG0126">
    <property type="taxonomic scope" value="Bacteria"/>
</dbReference>
<dbReference type="HOGENOM" id="CLU_025427_0_2_7"/>
<dbReference type="UniPathway" id="UPA00109">
    <property type="reaction ID" value="UER00185"/>
</dbReference>
<dbReference type="Proteomes" id="UP000000422">
    <property type="component" value="Chromosome"/>
</dbReference>
<dbReference type="GO" id="GO:0005829">
    <property type="term" value="C:cytosol"/>
    <property type="evidence" value="ECO:0007669"/>
    <property type="project" value="TreeGrafter"/>
</dbReference>
<dbReference type="GO" id="GO:0043531">
    <property type="term" value="F:ADP binding"/>
    <property type="evidence" value="ECO:0007669"/>
    <property type="project" value="TreeGrafter"/>
</dbReference>
<dbReference type="GO" id="GO:0005524">
    <property type="term" value="F:ATP binding"/>
    <property type="evidence" value="ECO:0007669"/>
    <property type="project" value="UniProtKB-KW"/>
</dbReference>
<dbReference type="GO" id="GO:0004618">
    <property type="term" value="F:phosphoglycerate kinase activity"/>
    <property type="evidence" value="ECO:0007669"/>
    <property type="project" value="UniProtKB-UniRule"/>
</dbReference>
<dbReference type="GO" id="GO:0006094">
    <property type="term" value="P:gluconeogenesis"/>
    <property type="evidence" value="ECO:0007669"/>
    <property type="project" value="TreeGrafter"/>
</dbReference>
<dbReference type="GO" id="GO:0006096">
    <property type="term" value="P:glycolytic process"/>
    <property type="evidence" value="ECO:0007669"/>
    <property type="project" value="UniProtKB-UniRule"/>
</dbReference>
<dbReference type="FunFam" id="3.40.50.1260:FF:000006">
    <property type="entry name" value="Phosphoglycerate kinase"/>
    <property type="match status" value="1"/>
</dbReference>
<dbReference type="FunFam" id="3.40.50.1260:FF:000012">
    <property type="entry name" value="Phosphoglycerate kinase"/>
    <property type="match status" value="1"/>
</dbReference>
<dbReference type="Gene3D" id="3.40.50.1260">
    <property type="entry name" value="Phosphoglycerate kinase, N-terminal domain"/>
    <property type="match status" value="2"/>
</dbReference>
<dbReference type="HAMAP" id="MF_00145">
    <property type="entry name" value="Phosphoglyc_kinase"/>
    <property type="match status" value="1"/>
</dbReference>
<dbReference type="InterPro" id="IPR001576">
    <property type="entry name" value="Phosphoglycerate_kinase"/>
</dbReference>
<dbReference type="InterPro" id="IPR015911">
    <property type="entry name" value="Phosphoglycerate_kinase_CS"/>
</dbReference>
<dbReference type="InterPro" id="IPR015824">
    <property type="entry name" value="Phosphoglycerate_kinase_N"/>
</dbReference>
<dbReference type="InterPro" id="IPR036043">
    <property type="entry name" value="Phosphoglycerate_kinase_sf"/>
</dbReference>
<dbReference type="PANTHER" id="PTHR11406">
    <property type="entry name" value="PHOSPHOGLYCERATE KINASE"/>
    <property type="match status" value="1"/>
</dbReference>
<dbReference type="PANTHER" id="PTHR11406:SF23">
    <property type="entry name" value="PHOSPHOGLYCERATE KINASE 1, CHLOROPLASTIC-RELATED"/>
    <property type="match status" value="1"/>
</dbReference>
<dbReference type="Pfam" id="PF00162">
    <property type="entry name" value="PGK"/>
    <property type="match status" value="1"/>
</dbReference>
<dbReference type="PIRSF" id="PIRSF000724">
    <property type="entry name" value="Pgk"/>
    <property type="match status" value="1"/>
</dbReference>
<dbReference type="PRINTS" id="PR00477">
    <property type="entry name" value="PHGLYCKINASE"/>
</dbReference>
<dbReference type="SUPFAM" id="SSF53748">
    <property type="entry name" value="Phosphoglycerate kinase"/>
    <property type="match status" value="1"/>
</dbReference>
<dbReference type="PROSITE" id="PS00111">
    <property type="entry name" value="PGLYCERATE_KINASE"/>
    <property type="match status" value="1"/>
</dbReference>
<gene>
    <name evidence="1" type="primary">pgk</name>
    <name type="ordered locus">WS1030</name>
</gene>